<gene>
    <name evidence="1" type="primary">rplE</name>
    <name type="ordered locus">ZMO0528</name>
</gene>
<accession>Q5NQ53</accession>
<name>RL5_ZYMMO</name>
<organism>
    <name type="scientific">Zymomonas mobilis subsp. mobilis (strain ATCC 31821 / ZM4 / CP4)</name>
    <dbReference type="NCBI Taxonomy" id="264203"/>
    <lineage>
        <taxon>Bacteria</taxon>
        <taxon>Pseudomonadati</taxon>
        <taxon>Pseudomonadota</taxon>
        <taxon>Alphaproteobacteria</taxon>
        <taxon>Sphingomonadales</taxon>
        <taxon>Zymomonadaceae</taxon>
        <taxon>Zymomonas</taxon>
    </lineage>
</organism>
<dbReference type="EMBL" id="AE008692">
    <property type="protein sequence ID" value="AAV89152.1"/>
    <property type="molecule type" value="Genomic_DNA"/>
</dbReference>
<dbReference type="RefSeq" id="WP_011240435.1">
    <property type="nucleotide sequence ID" value="NZ_CP035711.1"/>
</dbReference>
<dbReference type="SMR" id="Q5NQ53"/>
<dbReference type="STRING" id="264203.ZMO0528"/>
<dbReference type="GeneID" id="79904280"/>
<dbReference type="KEGG" id="zmo:ZMO0528"/>
<dbReference type="eggNOG" id="COG0094">
    <property type="taxonomic scope" value="Bacteria"/>
</dbReference>
<dbReference type="HOGENOM" id="CLU_061015_2_1_5"/>
<dbReference type="Proteomes" id="UP000001173">
    <property type="component" value="Chromosome"/>
</dbReference>
<dbReference type="GO" id="GO:1990904">
    <property type="term" value="C:ribonucleoprotein complex"/>
    <property type="evidence" value="ECO:0007669"/>
    <property type="project" value="UniProtKB-KW"/>
</dbReference>
<dbReference type="GO" id="GO:0005840">
    <property type="term" value="C:ribosome"/>
    <property type="evidence" value="ECO:0007669"/>
    <property type="project" value="UniProtKB-KW"/>
</dbReference>
<dbReference type="GO" id="GO:0019843">
    <property type="term" value="F:rRNA binding"/>
    <property type="evidence" value="ECO:0007669"/>
    <property type="project" value="UniProtKB-UniRule"/>
</dbReference>
<dbReference type="GO" id="GO:0003735">
    <property type="term" value="F:structural constituent of ribosome"/>
    <property type="evidence" value="ECO:0007669"/>
    <property type="project" value="InterPro"/>
</dbReference>
<dbReference type="GO" id="GO:0000049">
    <property type="term" value="F:tRNA binding"/>
    <property type="evidence" value="ECO:0007669"/>
    <property type="project" value="UniProtKB-UniRule"/>
</dbReference>
<dbReference type="GO" id="GO:0006412">
    <property type="term" value="P:translation"/>
    <property type="evidence" value="ECO:0007669"/>
    <property type="project" value="UniProtKB-UniRule"/>
</dbReference>
<dbReference type="FunFam" id="3.30.1440.10:FF:000001">
    <property type="entry name" value="50S ribosomal protein L5"/>
    <property type="match status" value="1"/>
</dbReference>
<dbReference type="Gene3D" id="3.30.1440.10">
    <property type="match status" value="1"/>
</dbReference>
<dbReference type="HAMAP" id="MF_01333_B">
    <property type="entry name" value="Ribosomal_uL5_B"/>
    <property type="match status" value="1"/>
</dbReference>
<dbReference type="InterPro" id="IPR002132">
    <property type="entry name" value="Ribosomal_uL5"/>
</dbReference>
<dbReference type="InterPro" id="IPR020930">
    <property type="entry name" value="Ribosomal_uL5_bac-type"/>
</dbReference>
<dbReference type="InterPro" id="IPR031309">
    <property type="entry name" value="Ribosomal_uL5_C"/>
</dbReference>
<dbReference type="InterPro" id="IPR020929">
    <property type="entry name" value="Ribosomal_uL5_CS"/>
</dbReference>
<dbReference type="InterPro" id="IPR022803">
    <property type="entry name" value="Ribosomal_uL5_dom_sf"/>
</dbReference>
<dbReference type="InterPro" id="IPR031310">
    <property type="entry name" value="Ribosomal_uL5_N"/>
</dbReference>
<dbReference type="NCBIfam" id="NF000585">
    <property type="entry name" value="PRK00010.1"/>
    <property type="match status" value="1"/>
</dbReference>
<dbReference type="PANTHER" id="PTHR11994">
    <property type="entry name" value="60S RIBOSOMAL PROTEIN L11-RELATED"/>
    <property type="match status" value="1"/>
</dbReference>
<dbReference type="Pfam" id="PF00281">
    <property type="entry name" value="Ribosomal_L5"/>
    <property type="match status" value="1"/>
</dbReference>
<dbReference type="Pfam" id="PF00673">
    <property type="entry name" value="Ribosomal_L5_C"/>
    <property type="match status" value="1"/>
</dbReference>
<dbReference type="PIRSF" id="PIRSF002161">
    <property type="entry name" value="Ribosomal_L5"/>
    <property type="match status" value="1"/>
</dbReference>
<dbReference type="SUPFAM" id="SSF55282">
    <property type="entry name" value="RL5-like"/>
    <property type="match status" value="1"/>
</dbReference>
<dbReference type="PROSITE" id="PS00358">
    <property type="entry name" value="RIBOSOMAL_L5"/>
    <property type="match status" value="1"/>
</dbReference>
<reference key="1">
    <citation type="journal article" date="2005" name="Nat. Biotechnol.">
        <title>The genome sequence of the ethanologenic bacterium Zymomonas mobilis ZM4.</title>
        <authorList>
            <person name="Seo J.-S."/>
            <person name="Chong H."/>
            <person name="Park H.S."/>
            <person name="Yoon K.-O."/>
            <person name="Jung C."/>
            <person name="Kim J.J."/>
            <person name="Hong J.H."/>
            <person name="Kim H."/>
            <person name="Kim J.-H."/>
            <person name="Kil J.-I."/>
            <person name="Park C.J."/>
            <person name="Oh H.-M."/>
            <person name="Lee J.-S."/>
            <person name="Jin S.-J."/>
            <person name="Um H.-W."/>
            <person name="Lee H.-J."/>
            <person name="Oh S.-J."/>
            <person name="Kim J.Y."/>
            <person name="Kang H.L."/>
            <person name="Lee S.Y."/>
            <person name="Lee K.J."/>
            <person name="Kang H.S."/>
        </authorList>
    </citation>
    <scope>NUCLEOTIDE SEQUENCE [LARGE SCALE GENOMIC DNA]</scope>
    <source>
        <strain>ATCC 31821 / ZM4 / CP4</strain>
    </source>
</reference>
<sequence length="192" mass="21740">MAKAYVPRLKKQYDDEIIKAMTEKFGYKNAFEVPKLTKIVLNMGVGEATQDKKKVDQAAAEMELIAGQKPVVTRAKKSIAQFKLREGMPIGVKVTLRRERMFEFLDRFLTIALPRVRDFRGLNPKSFDGRGNYATGIKEQLIFPEISYDQVSTIRGMDVVVATTAKTDEEARELLRLFGFPFPADTTQKKAA</sequence>
<keyword id="KW-1185">Reference proteome</keyword>
<keyword id="KW-0687">Ribonucleoprotein</keyword>
<keyword id="KW-0689">Ribosomal protein</keyword>
<keyword id="KW-0694">RNA-binding</keyword>
<keyword id="KW-0699">rRNA-binding</keyword>
<keyword id="KW-0820">tRNA-binding</keyword>
<protein>
    <recommendedName>
        <fullName evidence="1">Large ribosomal subunit protein uL5</fullName>
    </recommendedName>
    <alternativeName>
        <fullName evidence="2">50S ribosomal protein L5</fullName>
    </alternativeName>
</protein>
<comment type="function">
    <text evidence="1">This is one of the proteins that bind and probably mediate the attachment of the 5S RNA into the large ribosomal subunit, where it forms part of the central protuberance. In the 70S ribosome it contacts protein S13 of the 30S subunit (bridge B1b), connecting the 2 subunits; this bridge is implicated in subunit movement. Contacts the P site tRNA; the 5S rRNA and some of its associated proteins might help stabilize positioning of ribosome-bound tRNAs.</text>
</comment>
<comment type="subunit">
    <text evidence="1">Part of the 50S ribosomal subunit; part of the 5S rRNA/L5/L18/L25 subcomplex. Contacts the 5S rRNA and the P site tRNA. Forms a bridge to the 30S subunit in the 70S ribosome.</text>
</comment>
<comment type="similarity">
    <text evidence="1">Belongs to the universal ribosomal protein uL5 family.</text>
</comment>
<feature type="chain" id="PRO_0000243091" description="Large ribosomal subunit protein uL5">
    <location>
        <begin position="1"/>
        <end position="192"/>
    </location>
</feature>
<proteinExistence type="inferred from homology"/>
<evidence type="ECO:0000255" key="1">
    <source>
        <dbReference type="HAMAP-Rule" id="MF_01333"/>
    </source>
</evidence>
<evidence type="ECO:0000305" key="2"/>